<protein>
    <recommendedName>
        <fullName>NAD-dependent malic enzyme, mitochondrial</fullName>
        <shortName>NAD-ME</shortName>
        <ecNumber evidence="2 3">1.1.1.38</ecNumber>
    </recommendedName>
</protein>
<proteinExistence type="evidence at protein level"/>
<reference key="1">
    <citation type="journal article" date="1993" name="Arch. Biochem. Biophys.">
        <title>Cloning and nucleotide sequence of a full-length cDNA encoding Ascaris suum malic enzyme.</title>
        <authorList>
            <person name="Kulkarni G."/>
            <person name="Cook P.F."/>
            <person name="Harris B.G."/>
        </authorList>
    </citation>
    <scope>NUCLEOTIDE SEQUENCE [MRNA]</scope>
</reference>
<reference key="2">
    <citation type="journal article" date="1999" name="Biochemistry">
        <title>Mapping the active site topography of the NAD-malic enzyme via alanine-scanning site-directed mutagenesis.</title>
        <authorList>
            <person name="Karsten W.E."/>
            <person name="Chooback L."/>
            <person name="Liu D."/>
            <person name="Hwang C.-C."/>
            <person name="Lynch C."/>
            <person name="Cook P.F."/>
        </authorList>
    </citation>
    <scope>FUNCTION</scope>
    <scope>CATALYTIC ACTIVITY</scope>
    <scope>MUTAGENESIS OF GLU-96; ASP-216; ASP-310; ASP-332; ASP-333; ASP-399 AND GLU-478</scope>
</reference>
<reference key="3">
    <citation type="journal article" date="2000" name="Biochemistry">
        <title>Lysine 199 is the general acid in the NAD-malic enzyme reaction.</title>
        <authorList>
            <person name="Liu D."/>
            <person name="Karsten W.E."/>
            <person name="Cook P.F."/>
        </authorList>
    </citation>
    <scope>FUNCTION</scope>
    <scope>CATALYTIC ACTIVITY</scope>
    <scope>MUTAGENESIS OF TYR-164 AND LYS-237</scope>
</reference>
<reference key="4">
    <citation type="journal article" date="2005" name="Biochemistry">
        <title>A catalytic triad is responsible for acid-base chemistry in the Ascaris suum NAD-malic enzyme.</title>
        <authorList>
            <person name="Karsten W.E."/>
            <person name="Liu D."/>
            <person name="Rao G.S."/>
            <person name="Harris B.G."/>
            <person name="Cook P.F."/>
        </authorList>
    </citation>
    <scope>MECHANISM</scope>
    <scope>PH-DEPENDENCE OF ACTIVITY OF MUTANTS PHE-164; ARG-237 AND ALA-332</scope>
</reference>
<reference evidence="8" key="5">
    <citation type="journal article" date="2002" name="Biochemistry">
        <title>Crystal structure of the malic enzyme from Ascaris suum complexed with nicotinamide adenine dinucleotide at 2.3 A resolution.</title>
        <authorList>
            <person name="Coleman D.E."/>
            <person name="Rao G.S.J."/>
            <person name="Goldsmith E.J."/>
            <person name="Cook P.F."/>
            <person name="Harris B.G."/>
        </authorList>
    </citation>
    <scope>X-RAY CRYSTALLOGRAPHY (2.3 ANGSTROMS) OF 39-643 IN COMPLEX WITH NAD</scope>
</reference>
<reference evidence="9" key="6">
    <citation type="journal article" date="2003" name="J. Biol. Chem.">
        <title>Crystallographic studies on Ascaris suum NAD-malic enzyme bound to reduced cofactor and identification of an effector site.</title>
        <authorList>
            <person name="Rao G.S.J."/>
            <person name="Coleman D.E."/>
            <person name="Karsten W.E."/>
            <person name="Cook P.F."/>
            <person name="Harris B.G."/>
        </authorList>
    </citation>
    <scope>X-RAY CRYSTALLOGRAPHY (2.0 ANGSTROMS) OF 39-643 IN COMPLEX WITH NAD; MAGNESIUM AND INHIBITOR</scope>
</reference>
<organism>
    <name type="scientific">Ascaris suum</name>
    <name type="common">Pig roundworm</name>
    <name type="synonym">Ascaris lumbricoides</name>
    <dbReference type="NCBI Taxonomy" id="6253"/>
    <lineage>
        <taxon>Eukaryota</taxon>
        <taxon>Metazoa</taxon>
        <taxon>Ecdysozoa</taxon>
        <taxon>Nematoda</taxon>
        <taxon>Chromadorea</taxon>
        <taxon>Rhabditida</taxon>
        <taxon>Spirurina</taxon>
        <taxon>Ascaridomorpha</taxon>
        <taxon>Ascaridoidea</taxon>
        <taxon>Ascarididae</taxon>
        <taxon>Ascaris</taxon>
    </lineage>
</organism>
<comment type="function">
    <text evidence="2 3">NAD-dependent mitochondrial malic enzyme that catalyzes the oxidative decarboxylation of malate to pyruvate.</text>
</comment>
<comment type="catalytic activity">
    <reaction evidence="2 3">
        <text>(S)-malate + NAD(+) = pyruvate + CO2 + NADH</text>
        <dbReference type="Rhea" id="RHEA:12653"/>
        <dbReference type="ChEBI" id="CHEBI:15361"/>
        <dbReference type="ChEBI" id="CHEBI:15589"/>
        <dbReference type="ChEBI" id="CHEBI:16526"/>
        <dbReference type="ChEBI" id="CHEBI:57540"/>
        <dbReference type="ChEBI" id="CHEBI:57945"/>
        <dbReference type="EC" id="1.1.1.38"/>
    </reaction>
</comment>
<comment type="catalytic activity">
    <reaction evidence="1">
        <text>oxaloacetate + H(+) = pyruvate + CO2</text>
        <dbReference type="Rhea" id="RHEA:15641"/>
        <dbReference type="ChEBI" id="CHEBI:15361"/>
        <dbReference type="ChEBI" id="CHEBI:15378"/>
        <dbReference type="ChEBI" id="CHEBI:16452"/>
        <dbReference type="ChEBI" id="CHEBI:16526"/>
        <dbReference type="EC" id="1.1.1.38"/>
    </reaction>
</comment>
<comment type="cofactor">
    <cofactor evidence="1">
        <name>Mg(2+)</name>
        <dbReference type="ChEBI" id="CHEBI:18420"/>
    </cofactor>
    <cofactor evidence="1">
        <name>Mn(2+)</name>
        <dbReference type="ChEBI" id="CHEBI:29035"/>
    </cofactor>
    <text evidence="1">Divalent metal cations. Prefers magnesium or manganese.</text>
</comment>
<comment type="activity regulation">
    <text evidence="1">Subject to allosteric activation by fumarate.</text>
</comment>
<comment type="subunit">
    <text evidence="1">Homotetramer.</text>
</comment>
<comment type="subcellular location">
    <subcellularLocation>
        <location evidence="1">Mitochondrion matrix</location>
    </subcellularLocation>
</comment>
<comment type="miscellaneous">
    <text evidence="1">This isoenzyme can also use NADP(+) but is more effective with NAD(+).</text>
</comment>
<comment type="similarity">
    <text evidence="6">Belongs to the malic enzymes family.</text>
</comment>
<dbReference type="EC" id="1.1.1.38" evidence="2 3"/>
<dbReference type="EMBL" id="M81055">
    <property type="status" value="NOT_ANNOTATED_CDS"/>
    <property type="molecule type" value="mRNA"/>
</dbReference>
<dbReference type="PIR" id="S29742">
    <property type="entry name" value="S29742"/>
</dbReference>
<dbReference type="PDB" id="1LLQ">
    <property type="method" value="X-ray"/>
    <property type="resolution" value="2.30 A"/>
    <property type="chains" value="A/B=39-643"/>
</dbReference>
<dbReference type="PDB" id="1O0S">
    <property type="method" value="X-ray"/>
    <property type="resolution" value="2.00 A"/>
    <property type="chains" value="A/B=39-643"/>
</dbReference>
<dbReference type="PDBsum" id="1LLQ"/>
<dbReference type="PDBsum" id="1O0S"/>
<dbReference type="SMR" id="P27443"/>
<dbReference type="BioCyc" id="MetaCyc:MONOMER-18298"/>
<dbReference type="BRENDA" id="1.1.1.38">
    <property type="organism ID" value="474"/>
</dbReference>
<dbReference type="SABIO-RK" id="P27443"/>
<dbReference type="EvolutionaryTrace" id="P27443"/>
<dbReference type="GO" id="GO:0005759">
    <property type="term" value="C:mitochondrial matrix"/>
    <property type="evidence" value="ECO:0007669"/>
    <property type="project" value="UniProtKB-SubCell"/>
</dbReference>
<dbReference type="GO" id="GO:0004471">
    <property type="term" value="F:malate dehydrogenase (decarboxylating) (NAD+) activity"/>
    <property type="evidence" value="ECO:0007669"/>
    <property type="project" value="RHEA"/>
</dbReference>
<dbReference type="GO" id="GO:0004473">
    <property type="term" value="F:malate dehydrogenase (decarboxylating) (NADP+) activity"/>
    <property type="evidence" value="ECO:0007669"/>
    <property type="project" value="TreeGrafter"/>
</dbReference>
<dbReference type="GO" id="GO:0046872">
    <property type="term" value="F:metal ion binding"/>
    <property type="evidence" value="ECO:0007669"/>
    <property type="project" value="UniProtKB-KW"/>
</dbReference>
<dbReference type="GO" id="GO:0051287">
    <property type="term" value="F:NAD binding"/>
    <property type="evidence" value="ECO:0007669"/>
    <property type="project" value="InterPro"/>
</dbReference>
<dbReference type="GO" id="GO:0008948">
    <property type="term" value="F:oxaloacetate decarboxylase activity"/>
    <property type="evidence" value="ECO:0007669"/>
    <property type="project" value="RHEA"/>
</dbReference>
<dbReference type="GO" id="GO:0006108">
    <property type="term" value="P:malate metabolic process"/>
    <property type="evidence" value="ECO:0007669"/>
    <property type="project" value="TreeGrafter"/>
</dbReference>
<dbReference type="CDD" id="cd05312">
    <property type="entry name" value="NAD_bind_1_malic_enz"/>
    <property type="match status" value="1"/>
</dbReference>
<dbReference type="FunFam" id="3.40.50.10380:FF:000004">
    <property type="entry name" value="Malic enzyme"/>
    <property type="match status" value="1"/>
</dbReference>
<dbReference type="FunFam" id="3.40.50.720:FF:000060">
    <property type="entry name" value="Malic enzyme"/>
    <property type="match status" value="1"/>
</dbReference>
<dbReference type="Gene3D" id="3.40.50.10380">
    <property type="entry name" value="Malic enzyme, N-terminal domain"/>
    <property type="match status" value="1"/>
</dbReference>
<dbReference type="Gene3D" id="3.40.50.720">
    <property type="entry name" value="NAD(P)-binding Rossmann-like Domain"/>
    <property type="match status" value="1"/>
</dbReference>
<dbReference type="InterPro" id="IPR046346">
    <property type="entry name" value="Aminoacid_DH-like_N_sf"/>
</dbReference>
<dbReference type="InterPro" id="IPR015884">
    <property type="entry name" value="Malic_enzyme_CS"/>
</dbReference>
<dbReference type="InterPro" id="IPR012301">
    <property type="entry name" value="Malic_N_dom"/>
</dbReference>
<dbReference type="InterPro" id="IPR037062">
    <property type="entry name" value="Malic_N_dom_sf"/>
</dbReference>
<dbReference type="InterPro" id="IPR012302">
    <property type="entry name" value="Malic_NAD-bd"/>
</dbReference>
<dbReference type="InterPro" id="IPR001891">
    <property type="entry name" value="Malic_OxRdtase"/>
</dbReference>
<dbReference type="InterPro" id="IPR036291">
    <property type="entry name" value="NAD(P)-bd_dom_sf"/>
</dbReference>
<dbReference type="NCBIfam" id="NF010052">
    <property type="entry name" value="PRK13529.1"/>
    <property type="match status" value="1"/>
</dbReference>
<dbReference type="PANTHER" id="PTHR23406">
    <property type="entry name" value="MALIC ENZYME-RELATED"/>
    <property type="match status" value="1"/>
</dbReference>
<dbReference type="PANTHER" id="PTHR23406:SF90">
    <property type="entry name" value="MALIC ENZYME-RELATED"/>
    <property type="match status" value="1"/>
</dbReference>
<dbReference type="Pfam" id="PF00390">
    <property type="entry name" value="malic"/>
    <property type="match status" value="1"/>
</dbReference>
<dbReference type="Pfam" id="PF03949">
    <property type="entry name" value="Malic_M"/>
    <property type="match status" value="1"/>
</dbReference>
<dbReference type="PIRSF" id="PIRSF000106">
    <property type="entry name" value="ME"/>
    <property type="match status" value="1"/>
</dbReference>
<dbReference type="PRINTS" id="PR00072">
    <property type="entry name" value="MALOXRDTASE"/>
</dbReference>
<dbReference type="SMART" id="SM01274">
    <property type="entry name" value="malic"/>
    <property type="match status" value="1"/>
</dbReference>
<dbReference type="SMART" id="SM00919">
    <property type="entry name" value="Malic_M"/>
    <property type="match status" value="1"/>
</dbReference>
<dbReference type="SUPFAM" id="SSF53223">
    <property type="entry name" value="Aminoacid dehydrogenase-like, N-terminal domain"/>
    <property type="match status" value="1"/>
</dbReference>
<dbReference type="SUPFAM" id="SSF51735">
    <property type="entry name" value="NAD(P)-binding Rossmann-fold domains"/>
    <property type="match status" value="1"/>
</dbReference>
<dbReference type="PROSITE" id="PS00331">
    <property type="entry name" value="MALIC_ENZYMES"/>
    <property type="match status" value="1"/>
</dbReference>
<sequence>PRVRSFIAHQSGITSVIRRSPDIAHRMVRSLSVSSQRNKSVAHHEDVYSHNLPPMDEKEMALYKLYRPERVTPKKRSAELLKEPRLNKGMGFSLYERQYLGLHGLLPPAFMTQEQQAYRVITKLREQPNDLARYIQLDGLQDRNEKLFYRVVCDHVKELMPIVYTPTVGLACQNFGYIYRKPKGLYITINDNSVSKIYQILSNWHEEDVRAIVVTDGERILGLGDLGAYGIGIPVGKLALYVALGGVQPKWCLPVLLDVGTNNMDLLNDPFYIGLRHKRVRGKDYDTLLDNFMKACTKKYGQKTLIQFEDFANPNAFRLLDKYQDKYTMFNDDIQGTASVIVAGLLTCTRVTKKLVSQEKYLFFGAGAASTGIAEMIVHQMQNEGISKEEACNRIYLMDIDGLVTKNRKEMNPRHVQFAKDMPETTSILEVIRAARPGALIGASTVRGAFNEEVIRAMAEINERPIIFALSNPTSKAECTAEEAYTFTNGAALYASGSPFPNFELNGHTYKPGQGNNAYIFPGVALGTILFQIRHVDNDLFLLAAKKVASCVTEDSLKVGRVYPQLKEIREISIQIAVEMAKYCYKNGTANLYPQPEDLEKYVRAQVYNTEYEELINATYDWPEQDMRHGFPVPVVRHDSMDG</sequence>
<name>MAOM_ASCSU</name>
<evidence type="ECO:0000250" key="1">
    <source>
        <dbReference type="UniProtKB" id="P23368"/>
    </source>
</evidence>
<evidence type="ECO:0000269" key="2">
    <source>
    </source>
</evidence>
<evidence type="ECO:0000269" key="3">
    <source>
    </source>
</evidence>
<evidence type="ECO:0000269" key="4">
    <source>
    </source>
</evidence>
<evidence type="ECO:0000269" key="5">
    <source>
    </source>
</evidence>
<evidence type="ECO:0000305" key="6"/>
<evidence type="ECO:0000305" key="7">
    <source>
    </source>
</evidence>
<evidence type="ECO:0007744" key="8">
    <source>
        <dbReference type="PDB" id="1LLQ"/>
    </source>
</evidence>
<evidence type="ECO:0007744" key="9">
    <source>
        <dbReference type="PDB" id="1O0S"/>
    </source>
</evidence>
<evidence type="ECO:0007829" key="10">
    <source>
        <dbReference type="PDB" id="1LLQ"/>
    </source>
</evidence>
<evidence type="ECO:0007829" key="11">
    <source>
        <dbReference type="PDB" id="1O0S"/>
    </source>
</evidence>
<accession>P27443</accession>
<keyword id="KW-0002">3D-structure</keyword>
<keyword id="KW-0021">Allosteric enzyme</keyword>
<keyword id="KW-0479">Metal-binding</keyword>
<keyword id="KW-0496">Mitochondrion</keyword>
<keyword id="KW-0520">NAD</keyword>
<keyword id="KW-0560">Oxidoreductase</keyword>
<keyword id="KW-0809">Transit peptide</keyword>
<feature type="transit peptide" description="Mitochondrion">
    <location>
        <begin position="1" status="less than"/>
        <end position="38"/>
    </location>
</feature>
<feature type="chain" id="PRO_0000018541" description="NAD-dependent malic enzyme, mitochondrial">
    <location>
        <begin position="39"/>
        <end position="643"/>
    </location>
</feature>
<feature type="active site" description="Proton donor">
    <location>
        <position position="164"/>
    </location>
</feature>
<feature type="active site" description="Proton acceptor">
    <location>
        <position position="237"/>
    </location>
</feature>
<feature type="binding site" evidence="7">
    <location>
        <position position="116"/>
    </location>
    <ligand>
        <name>fumarate</name>
        <dbReference type="ChEBI" id="CHEBI:29806"/>
        <note>allosteric activator</note>
    </ligand>
</feature>
<feature type="binding site" evidence="7">
    <location>
        <position position="119"/>
    </location>
    <ligand>
        <name>fumarate</name>
        <dbReference type="ChEBI" id="CHEBI:29806"/>
        <note>allosteric activator</note>
    </ligand>
</feature>
<feature type="binding site" evidence="7">
    <location>
        <position position="143"/>
    </location>
    <ligand>
        <name>fumarate</name>
        <dbReference type="ChEBI" id="CHEBI:29806"/>
        <note>allosteric activator</note>
    </ligand>
</feature>
<feature type="binding site" evidence="1">
    <location>
        <position position="219"/>
    </location>
    <ligand>
        <name>(S)-malate</name>
        <dbReference type="ChEBI" id="CHEBI:15589"/>
    </ligand>
</feature>
<feature type="binding site" evidence="7 9">
    <location>
        <position position="219"/>
    </location>
    <ligand>
        <name>NAD(+)</name>
        <dbReference type="ChEBI" id="CHEBI:57540"/>
    </ligand>
</feature>
<feature type="binding site" evidence="1">
    <location>
        <position position="309"/>
    </location>
    <ligand>
        <name>a divalent metal cation</name>
        <dbReference type="ChEBI" id="CHEBI:60240"/>
    </ligand>
</feature>
<feature type="binding site" evidence="1">
    <location>
        <position position="310"/>
    </location>
    <ligand>
        <name>a divalent metal cation</name>
        <dbReference type="ChEBI" id="CHEBI:60240"/>
    </ligand>
</feature>
<feature type="binding site" evidence="7 9">
    <location>
        <position position="313"/>
    </location>
    <ligand>
        <name>NAD(+)</name>
        <dbReference type="ChEBI" id="CHEBI:57540"/>
    </ligand>
</feature>
<feature type="binding site" evidence="1">
    <location>
        <position position="333"/>
    </location>
    <ligand>
        <name>a divalent metal cation</name>
        <dbReference type="ChEBI" id="CHEBI:60240"/>
    </ligand>
</feature>
<feature type="binding site" evidence="7 9">
    <location>
        <position position="333"/>
    </location>
    <ligand>
        <name>NAD(+)</name>
        <dbReference type="ChEBI" id="CHEBI:57540"/>
    </ligand>
</feature>
<feature type="binding site" evidence="4 7 8 9">
    <location>
        <position position="366"/>
    </location>
    <ligand>
        <name>NAD(+)</name>
        <dbReference type="ChEBI" id="CHEBI:57540"/>
    </ligand>
</feature>
<feature type="binding site" evidence="4 7 8 9">
    <location>
        <position position="369"/>
    </location>
    <ligand>
        <name>NAD(+)</name>
        <dbReference type="ChEBI" id="CHEBI:57540"/>
    </ligand>
</feature>
<feature type="binding site" evidence="1">
    <location>
        <position position="472"/>
    </location>
    <ligand>
        <name>(S)-malate</name>
        <dbReference type="ChEBI" id="CHEBI:15589"/>
    </ligand>
</feature>
<feature type="binding site" evidence="4 5 8 9">
    <location>
        <position position="472"/>
    </location>
    <ligand>
        <name>NAD(+)</name>
        <dbReference type="ChEBI" id="CHEBI:57540"/>
    </ligand>
</feature>
<feature type="binding site" evidence="1">
    <location>
        <position position="516"/>
    </location>
    <ligand>
        <name>(S)-malate</name>
        <dbReference type="ChEBI" id="CHEBI:15589"/>
    </ligand>
</feature>
<feature type="mutagenesis site" description="Reduces activity over 1000-fold." evidence="2">
    <original>E</original>
    <variation>A</variation>
    <location>
        <position position="96"/>
    </location>
</feature>
<feature type="mutagenesis site" description="Reduces activity over 60000-fold." evidence="3">
    <original>Y</original>
    <variation>F</variation>
    <location>
        <position position="164"/>
    </location>
</feature>
<feature type="mutagenesis site" description="Reduces activity over 50-fold." evidence="2">
    <original>D</original>
    <variation>A</variation>
    <location>
        <position position="216"/>
    </location>
</feature>
<feature type="mutagenesis site" description="Reduces activity over 100000-fold." evidence="3">
    <original>K</original>
    <variation>A</variation>
    <location>
        <position position="237"/>
    </location>
</feature>
<feature type="mutagenesis site" description="Reduces activity over 10-fold." evidence="3">
    <original>K</original>
    <variation>R</variation>
    <location>
        <position position="237"/>
    </location>
</feature>
<feature type="mutagenesis site" description="Reduces activity over 800-fold." evidence="2">
    <original>D</original>
    <variation>A</variation>
    <location>
        <position position="310"/>
    </location>
</feature>
<feature type="mutagenesis site" description="Reduces activity over 13000-fold." evidence="2">
    <original>D</original>
    <variation>A</variation>
    <location>
        <position position="332"/>
    </location>
</feature>
<feature type="mutagenesis site" description="Reduces activity over 100000-fold." evidence="2">
    <original>D</original>
    <variation>A</variation>
    <location>
        <position position="333"/>
    </location>
</feature>
<feature type="mutagenesis site" description="Reduces activity 10-fold." evidence="2">
    <original>D</original>
    <variation>A</variation>
    <location>
        <position position="399"/>
    </location>
</feature>
<feature type="mutagenesis site" description="Reduces activity over 1000-fold." evidence="2">
    <original>E</original>
    <variation>A</variation>
    <location>
        <position position="478"/>
    </location>
</feature>
<feature type="non-terminal residue">
    <location>
        <position position="1"/>
    </location>
</feature>
<feature type="helix" evidence="11">
    <location>
        <begin position="57"/>
        <end position="66"/>
    </location>
</feature>
<feature type="helix" evidence="11">
    <location>
        <begin position="77"/>
        <end position="81"/>
    </location>
</feature>
<feature type="turn" evidence="11">
    <location>
        <begin position="84"/>
        <end position="86"/>
    </location>
</feature>
<feature type="helix" evidence="11">
    <location>
        <begin position="89"/>
        <end position="91"/>
    </location>
</feature>
<feature type="helix" evidence="11">
    <location>
        <begin position="94"/>
        <end position="99"/>
    </location>
</feature>
<feature type="turn" evidence="11">
    <location>
        <begin position="103"/>
        <end position="105"/>
    </location>
</feature>
<feature type="helix" evidence="11">
    <location>
        <begin position="113"/>
        <end position="126"/>
    </location>
</feature>
<feature type="strand" evidence="11">
    <location>
        <begin position="127"/>
        <end position="129"/>
    </location>
</feature>
<feature type="helix" evidence="11">
    <location>
        <begin position="130"/>
        <end position="143"/>
    </location>
</feature>
<feature type="helix" evidence="11">
    <location>
        <begin position="145"/>
        <end position="154"/>
    </location>
</feature>
<feature type="helix" evidence="11">
    <location>
        <begin position="156"/>
        <end position="163"/>
    </location>
</feature>
<feature type="helix" evidence="11">
    <location>
        <begin position="167"/>
        <end position="175"/>
    </location>
</feature>
<feature type="strand" evidence="11">
    <location>
        <begin position="184"/>
        <end position="188"/>
    </location>
</feature>
<feature type="helix" evidence="11">
    <location>
        <begin position="189"/>
        <end position="191"/>
    </location>
</feature>
<feature type="helix" evidence="11">
    <location>
        <begin position="194"/>
        <end position="201"/>
    </location>
</feature>
<feature type="strand" evidence="11">
    <location>
        <begin position="211"/>
        <end position="215"/>
    </location>
</feature>
<feature type="strand" evidence="10">
    <location>
        <begin position="217"/>
        <end position="220"/>
    </location>
</feature>
<feature type="turn" evidence="11">
    <location>
        <begin position="221"/>
        <end position="223"/>
    </location>
</feature>
<feature type="helix" evidence="11">
    <location>
        <begin position="227"/>
        <end position="231"/>
    </location>
</feature>
<feature type="helix" evidence="11">
    <location>
        <begin position="232"/>
        <end position="245"/>
    </location>
</feature>
<feature type="helix" evidence="11">
    <location>
        <begin position="249"/>
        <end position="251"/>
    </location>
</feature>
<feature type="strand" evidence="11">
    <location>
        <begin position="252"/>
        <end position="259"/>
    </location>
</feature>
<feature type="helix" evidence="11">
    <location>
        <begin position="264"/>
        <end position="268"/>
    </location>
</feature>
<feature type="helix" evidence="11">
    <location>
        <begin position="283"/>
        <end position="300"/>
    </location>
</feature>
<feature type="strand" evidence="11">
    <location>
        <begin position="305"/>
        <end position="308"/>
    </location>
</feature>
<feature type="helix" evidence="11">
    <location>
        <begin position="313"/>
        <end position="323"/>
    </location>
</feature>
<feature type="turn" evidence="11">
    <location>
        <begin position="324"/>
        <end position="326"/>
    </location>
</feature>
<feature type="strand" evidence="11">
    <location>
        <begin position="327"/>
        <end position="331"/>
    </location>
</feature>
<feature type="helix" evidence="11">
    <location>
        <begin position="332"/>
        <end position="352"/>
    </location>
</feature>
<feature type="helix" evidence="11">
    <location>
        <begin position="356"/>
        <end position="358"/>
    </location>
</feature>
<feature type="strand" evidence="11">
    <location>
        <begin position="361"/>
        <end position="364"/>
    </location>
</feature>
<feature type="helix" evidence="11">
    <location>
        <begin position="368"/>
        <end position="382"/>
    </location>
</feature>
<feature type="turn" evidence="11">
    <location>
        <begin position="383"/>
        <end position="385"/>
    </location>
</feature>
<feature type="helix" evidence="11">
    <location>
        <begin position="388"/>
        <end position="393"/>
    </location>
</feature>
<feature type="strand" evidence="11">
    <location>
        <begin position="395"/>
        <end position="399"/>
    </location>
</feature>
<feature type="strand" evidence="10">
    <location>
        <begin position="405"/>
        <end position="407"/>
    </location>
</feature>
<feature type="helix" evidence="11">
    <location>
        <begin position="413"/>
        <end position="415"/>
    </location>
</feature>
<feature type="turn" evidence="11">
    <location>
        <begin position="416"/>
        <end position="418"/>
    </location>
</feature>
<feature type="strand" evidence="11">
    <location>
        <begin position="420"/>
        <end position="422"/>
    </location>
</feature>
<feature type="helix" evidence="11">
    <location>
        <begin position="428"/>
        <end position="435"/>
    </location>
</feature>
<feature type="strand" evidence="11">
    <location>
        <begin position="438"/>
        <end position="442"/>
    </location>
</feature>
<feature type="helix" evidence="11">
    <location>
        <begin position="452"/>
        <end position="461"/>
    </location>
</feature>
<feature type="strand" evidence="11">
    <location>
        <begin position="466"/>
        <end position="469"/>
    </location>
</feature>
<feature type="helix" evidence="11">
    <location>
        <begin position="474"/>
        <end position="476"/>
    </location>
</feature>
<feature type="helix" evidence="11">
    <location>
        <begin position="481"/>
        <end position="486"/>
    </location>
</feature>
<feature type="turn" evidence="11">
    <location>
        <begin position="487"/>
        <end position="489"/>
    </location>
</feature>
<feature type="strand" evidence="11">
    <location>
        <begin position="493"/>
        <end position="498"/>
    </location>
</feature>
<feature type="strand" evidence="11">
    <location>
        <begin position="503"/>
        <end position="505"/>
    </location>
</feature>
<feature type="strand" evidence="11">
    <location>
        <begin position="508"/>
        <end position="510"/>
    </location>
</feature>
<feature type="helix" evidence="11">
    <location>
        <begin position="517"/>
        <end position="519"/>
    </location>
</feature>
<feature type="helix" evidence="11">
    <location>
        <begin position="521"/>
        <end position="531"/>
    </location>
</feature>
<feature type="helix" evidence="11">
    <location>
        <begin position="538"/>
        <end position="550"/>
    </location>
</feature>
<feature type="helix" evidence="11">
    <location>
        <begin position="554"/>
        <end position="557"/>
    </location>
</feature>
<feature type="turn" evidence="11">
    <location>
        <begin position="558"/>
        <end position="560"/>
    </location>
</feature>
<feature type="helix" evidence="11">
    <location>
        <begin position="566"/>
        <end position="568"/>
    </location>
</feature>
<feature type="helix" evidence="11">
    <location>
        <begin position="569"/>
        <end position="586"/>
    </location>
</feature>
<feature type="strand" evidence="11">
    <location>
        <begin position="592"/>
        <end position="594"/>
    </location>
</feature>
<feature type="helix" evidence="11">
    <location>
        <begin position="599"/>
        <end position="606"/>
    </location>
</feature>
<feature type="helix" evidence="11">
    <location>
        <begin position="624"/>
        <end position="627"/>
    </location>
</feature>